<feature type="chain" id="PRO_0000049860" description="Uncharacterized protein YrdA">
    <location>
        <begin position="1"/>
        <end position="167"/>
    </location>
</feature>
<feature type="binding site" evidence="1">
    <location>
        <position position="48"/>
    </location>
    <ligand>
        <name>a divalent metal cation</name>
        <dbReference type="ChEBI" id="CHEBI:60240"/>
    </ligand>
</feature>
<feature type="binding site" evidence="1">
    <location>
        <position position="127"/>
    </location>
    <ligand>
        <name>a divalent metal cation</name>
        <dbReference type="ChEBI" id="CHEBI:60240"/>
    </ligand>
</feature>
<feature type="binding site" evidence="1">
    <location>
        <position position="131"/>
    </location>
    <ligand>
        <name>a divalent metal cation</name>
        <dbReference type="ChEBI" id="CHEBI:60240"/>
    </ligand>
</feature>
<protein>
    <recommendedName>
        <fullName>Uncharacterized protein YrdA</fullName>
    </recommendedName>
</protein>
<sequence length="167" mass="18917">MFQTLDHFLKSWEFEADATQKLLNSLTDESLKQEITSQNWTLGRIAWHTVAAIGIITSNTDLTFQAPAEDYPVPTSAQFIADSYHQASNAFVQALKTQWTDHTLQERINFIGQQMPNGSLLMFLIQHQNHHRGQMTVLMRQAGLTVPGIYGPAKEEWAKFGLEAPKM</sequence>
<proteinExistence type="inferred from homology"/>
<comment type="similarity">
    <text evidence="2">Belongs to the DinB family.</text>
</comment>
<organism>
    <name type="scientific">Bacillus subtilis (strain 168)</name>
    <dbReference type="NCBI Taxonomy" id="224308"/>
    <lineage>
        <taxon>Bacteria</taxon>
        <taxon>Bacillati</taxon>
        <taxon>Bacillota</taxon>
        <taxon>Bacilli</taxon>
        <taxon>Bacillales</taxon>
        <taxon>Bacillaceae</taxon>
        <taxon>Bacillus</taxon>
    </lineage>
</organism>
<evidence type="ECO:0000250" key="1"/>
<evidence type="ECO:0000305" key="2"/>
<gene>
    <name type="primary">yrdA</name>
    <name type="ordered locus">BSU26780</name>
</gene>
<accession>O07079</accession>
<keyword id="KW-0479">Metal-binding</keyword>
<keyword id="KW-1185">Reference proteome</keyword>
<reference key="1">
    <citation type="journal article" date="1997" name="Microbiology">
        <title>Sequence of the Bacillus subtilis genome region in the vicinity of the lev operon reveals two new extracytoplasmic function RNA polymerase sigma factors SigV and SigZ.</title>
        <authorList>
            <person name="Sorokin A."/>
            <person name="Bolotin A."/>
            <person name="Purnelle B."/>
            <person name="Hilbert H."/>
            <person name="Lauber J."/>
            <person name="Duesterhoeft A."/>
            <person name="Ehrlich S.D."/>
        </authorList>
    </citation>
    <scope>NUCLEOTIDE SEQUENCE [GENOMIC DNA]</scope>
    <source>
        <strain>168</strain>
    </source>
</reference>
<reference key="2">
    <citation type="journal article" date="1997" name="Nature">
        <title>The complete genome sequence of the Gram-positive bacterium Bacillus subtilis.</title>
        <authorList>
            <person name="Kunst F."/>
            <person name="Ogasawara N."/>
            <person name="Moszer I."/>
            <person name="Albertini A.M."/>
            <person name="Alloni G."/>
            <person name="Azevedo V."/>
            <person name="Bertero M.G."/>
            <person name="Bessieres P."/>
            <person name="Bolotin A."/>
            <person name="Borchert S."/>
            <person name="Borriss R."/>
            <person name="Boursier L."/>
            <person name="Brans A."/>
            <person name="Braun M."/>
            <person name="Brignell S.C."/>
            <person name="Bron S."/>
            <person name="Brouillet S."/>
            <person name="Bruschi C.V."/>
            <person name="Caldwell B."/>
            <person name="Capuano V."/>
            <person name="Carter N.M."/>
            <person name="Choi S.-K."/>
            <person name="Codani J.-J."/>
            <person name="Connerton I.F."/>
            <person name="Cummings N.J."/>
            <person name="Daniel R.A."/>
            <person name="Denizot F."/>
            <person name="Devine K.M."/>
            <person name="Duesterhoeft A."/>
            <person name="Ehrlich S.D."/>
            <person name="Emmerson P.T."/>
            <person name="Entian K.-D."/>
            <person name="Errington J."/>
            <person name="Fabret C."/>
            <person name="Ferrari E."/>
            <person name="Foulger D."/>
            <person name="Fritz C."/>
            <person name="Fujita M."/>
            <person name="Fujita Y."/>
            <person name="Fuma S."/>
            <person name="Galizzi A."/>
            <person name="Galleron N."/>
            <person name="Ghim S.-Y."/>
            <person name="Glaser P."/>
            <person name="Goffeau A."/>
            <person name="Golightly E.J."/>
            <person name="Grandi G."/>
            <person name="Guiseppi G."/>
            <person name="Guy B.J."/>
            <person name="Haga K."/>
            <person name="Haiech J."/>
            <person name="Harwood C.R."/>
            <person name="Henaut A."/>
            <person name="Hilbert H."/>
            <person name="Holsappel S."/>
            <person name="Hosono S."/>
            <person name="Hullo M.-F."/>
            <person name="Itaya M."/>
            <person name="Jones L.-M."/>
            <person name="Joris B."/>
            <person name="Karamata D."/>
            <person name="Kasahara Y."/>
            <person name="Klaerr-Blanchard M."/>
            <person name="Klein C."/>
            <person name="Kobayashi Y."/>
            <person name="Koetter P."/>
            <person name="Koningstein G."/>
            <person name="Krogh S."/>
            <person name="Kumano M."/>
            <person name="Kurita K."/>
            <person name="Lapidus A."/>
            <person name="Lardinois S."/>
            <person name="Lauber J."/>
            <person name="Lazarevic V."/>
            <person name="Lee S.-M."/>
            <person name="Levine A."/>
            <person name="Liu H."/>
            <person name="Masuda S."/>
            <person name="Mauel C."/>
            <person name="Medigue C."/>
            <person name="Medina N."/>
            <person name="Mellado R.P."/>
            <person name="Mizuno M."/>
            <person name="Moestl D."/>
            <person name="Nakai S."/>
            <person name="Noback M."/>
            <person name="Noone D."/>
            <person name="O'Reilly M."/>
            <person name="Ogawa K."/>
            <person name="Ogiwara A."/>
            <person name="Oudega B."/>
            <person name="Park S.-H."/>
            <person name="Parro V."/>
            <person name="Pohl T.M."/>
            <person name="Portetelle D."/>
            <person name="Porwollik S."/>
            <person name="Prescott A.M."/>
            <person name="Presecan E."/>
            <person name="Pujic P."/>
            <person name="Purnelle B."/>
            <person name="Rapoport G."/>
            <person name="Rey M."/>
            <person name="Reynolds S."/>
            <person name="Rieger M."/>
            <person name="Rivolta C."/>
            <person name="Rocha E."/>
            <person name="Roche B."/>
            <person name="Rose M."/>
            <person name="Sadaie Y."/>
            <person name="Sato T."/>
            <person name="Scanlan E."/>
            <person name="Schleich S."/>
            <person name="Schroeter R."/>
            <person name="Scoffone F."/>
            <person name="Sekiguchi J."/>
            <person name="Sekowska A."/>
            <person name="Seror S.J."/>
            <person name="Serror P."/>
            <person name="Shin B.-S."/>
            <person name="Soldo B."/>
            <person name="Sorokin A."/>
            <person name="Tacconi E."/>
            <person name="Takagi T."/>
            <person name="Takahashi H."/>
            <person name="Takemaru K."/>
            <person name="Takeuchi M."/>
            <person name="Tamakoshi A."/>
            <person name="Tanaka T."/>
            <person name="Terpstra P."/>
            <person name="Tognoni A."/>
            <person name="Tosato V."/>
            <person name="Uchiyama S."/>
            <person name="Vandenbol M."/>
            <person name="Vannier F."/>
            <person name="Vassarotti A."/>
            <person name="Viari A."/>
            <person name="Wambutt R."/>
            <person name="Wedler E."/>
            <person name="Wedler H."/>
            <person name="Weitzenegger T."/>
            <person name="Winters P."/>
            <person name="Wipat A."/>
            <person name="Yamamoto H."/>
            <person name="Yamane K."/>
            <person name="Yasumoto K."/>
            <person name="Yata K."/>
            <person name="Yoshida K."/>
            <person name="Yoshikawa H.-F."/>
            <person name="Zumstein E."/>
            <person name="Yoshikawa H."/>
            <person name="Danchin A."/>
        </authorList>
    </citation>
    <scope>NUCLEOTIDE SEQUENCE [LARGE SCALE GENOMIC DNA]</scope>
    <source>
        <strain>168</strain>
    </source>
</reference>
<dbReference type="EMBL" id="U93876">
    <property type="protein sequence ID" value="AAB80894.1"/>
    <property type="molecule type" value="Genomic_DNA"/>
</dbReference>
<dbReference type="EMBL" id="AL009126">
    <property type="protein sequence ID" value="CAB14619.1"/>
    <property type="molecule type" value="Genomic_DNA"/>
</dbReference>
<dbReference type="PIR" id="G69972">
    <property type="entry name" value="G69972"/>
</dbReference>
<dbReference type="RefSeq" id="NP_390555.1">
    <property type="nucleotide sequence ID" value="NC_000964.3"/>
</dbReference>
<dbReference type="RefSeq" id="WP_004399152.1">
    <property type="nucleotide sequence ID" value="NZ_OZ025638.1"/>
</dbReference>
<dbReference type="SMR" id="O07079"/>
<dbReference type="FunCoup" id="O07079">
    <property type="interactions" value="2"/>
</dbReference>
<dbReference type="STRING" id="224308.BSU26780"/>
<dbReference type="PaxDb" id="224308-BSU26780"/>
<dbReference type="EnsemblBacteria" id="CAB14619">
    <property type="protein sequence ID" value="CAB14619"/>
    <property type="gene ID" value="BSU_26780"/>
</dbReference>
<dbReference type="GeneID" id="937620"/>
<dbReference type="KEGG" id="bsu:BSU26780"/>
<dbReference type="PATRIC" id="fig|224308.179.peg.2909"/>
<dbReference type="eggNOG" id="COG2318">
    <property type="taxonomic scope" value="Bacteria"/>
</dbReference>
<dbReference type="InParanoid" id="O07079"/>
<dbReference type="OrthoDB" id="119432at2"/>
<dbReference type="BioCyc" id="BSUB:BSU26780-MONOMER"/>
<dbReference type="Proteomes" id="UP000001570">
    <property type="component" value="Chromosome"/>
</dbReference>
<dbReference type="GO" id="GO:0046872">
    <property type="term" value="F:metal ion binding"/>
    <property type="evidence" value="ECO:0007669"/>
    <property type="project" value="UniProtKB-KW"/>
</dbReference>
<dbReference type="Gene3D" id="1.20.120.450">
    <property type="entry name" value="dinb family like domain"/>
    <property type="match status" value="1"/>
</dbReference>
<dbReference type="InterPro" id="IPR007837">
    <property type="entry name" value="DinB"/>
</dbReference>
<dbReference type="InterPro" id="IPR034660">
    <property type="entry name" value="DinB/YfiT-like"/>
</dbReference>
<dbReference type="Pfam" id="PF05163">
    <property type="entry name" value="DinB"/>
    <property type="match status" value="1"/>
</dbReference>
<dbReference type="SUPFAM" id="SSF109854">
    <property type="entry name" value="DinB/YfiT-like putative metalloenzymes"/>
    <property type="match status" value="1"/>
</dbReference>
<name>YRDA_BACSU</name>